<proteinExistence type="inferred from homology"/>
<accession>A7HUU8</accession>
<keyword id="KW-1185">Reference proteome</keyword>
<keyword id="KW-0687">Ribonucleoprotein</keyword>
<keyword id="KW-0689">Ribosomal protein</keyword>
<comment type="similarity">
    <text evidence="1">Belongs to the bacterial ribosomal protein bS21 family.</text>
</comment>
<protein>
    <recommendedName>
        <fullName evidence="1">Small ribosomal subunit protein bS21</fullName>
    </recommendedName>
    <alternativeName>
        <fullName evidence="2">30S ribosomal protein S21</fullName>
    </alternativeName>
</protein>
<name>RS21_PARL1</name>
<dbReference type="EMBL" id="CP000774">
    <property type="protein sequence ID" value="ABS63681.1"/>
    <property type="molecule type" value="Genomic_DNA"/>
</dbReference>
<dbReference type="SMR" id="A7HUU8"/>
<dbReference type="STRING" id="402881.Plav_2067"/>
<dbReference type="KEGG" id="pla:Plav_2067"/>
<dbReference type="eggNOG" id="COG0828">
    <property type="taxonomic scope" value="Bacteria"/>
</dbReference>
<dbReference type="HOGENOM" id="CLU_159258_0_1_5"/>
<dbReference type="OrthoDB" id="9811907at2"/>
<dbReference type="Proteomes" id="UP000006377">
    <property type="component" value="Chromosome"/>
</dbReference>
<dbReference type="GO" id="GO:1990904">
    <property type="term" value="C:ribonucleoprotein complex"/>
    <property type="evidence" value="ECO:0007669"/>
    <property type="project" value="UniProtKB-KW"/>
</dbReference>
<dbReference type="GO" id="GO:0005840">
    <property type="term" value="C:ribosome"/>
    <property type="evidence" value="ECO:0007669"/>
    <property type="project" value="UniProtKB-KW"/>
</dbReference>
<dbReference type="GO" id="GO:0003735">
    <property type="term" value="F:structural constituent of ribosome"/>
    <property type="evidence" value="ECO:0007669"/>
    <property type="project" value="InterPro"/>
</dbReference>
<dbReference type="GO" id="GO:0006412">
    <property type="term" value="P:translation"/>
    <property type="evidence" value="ECO:0007669"/>
    <property type="project" value="UniProtKB-UniRule"/>
</dbReference>
<dbReference type="Gene3D" id="1.20.5.1150">
    <property type="entry name" value="Ribosomal protein S8"/>
    <property type="match status" value="1"/>
</dbReference>
<dbReference type="HAMAP" id="MF_00358">
    <property type="entry name" value="Ribosomal_bS21"/>
    <property type="match status" value="1"/>
</dbReference>
<dbReference type="InterPro" id="IPR001911">
    <property type="entry name" value="Ribosomal_bS21"/>
</dbReference>
<dbReference type="InterPro" id="IPR038380">
    <property type="entry name" value="Ribosomal_bS21_sf"/>
</dbReference>
<dbReference type="NCBIfam" id="TIGR00030">
    <property type="entry name" value="S21p"/>
    <property type="match status" value="1"/>
</dbReference>
<dbReference type="PANTHER" id="PTHR21109">
    <property type="entry name" value="MITOCHONDRIAL 28S RIBOSOMAL PROTEIN S21"/>
    <property type="match status" value="1"/>
</dbReference>
<dbReference type="PANTHER" id="PTHR21109:SF0">
    <property type="entry name" value="SMALL RIBOSOMAL SUBUNIT PROTEIN BS21M"/>
    <property type="match status" value="1"/>
</dbReference>
<dbReference type="Pfam" id="PF01165">
    <property type="entry name" value="Ribosomal_S21"/>
    <property type="match status" value="1"/>
</dbReference>
<dbReference type="PRINTS" id="PR00976">
    <property type="entry name" value="RIBOSOMALS21"/>
</dbReference>
<evidence type="ECO:0000255" key="1">
    <source>
        <dbReference type="HAMAP-Rule" id="MF_00358"/>
    </source>
</evidence>
<evidence type="ECO:0000305" key="2"/>
<reference key="1">
    <citation type="journal article" date="2011" name="Stand. Genomic Sci.">
        <title>Complete genome sequence of Parvibaculum lavamentivorans type strain (DS-1(T)).</title>
        <authorList>
            <person name="Schleheck D."/>
            <person name="Weiss M."/>
            <person name="Pitluck S."/>
            <person name="Bruce D."/>
            <person name="Land M.L."/>
            <person name="Han S."/>
            <person name="Saunders E."/>
            <person name="Tapia R."/>
            <person name="Detter C."/>
            <person name="Brettin T."/>
            <person name="Han J."/>
            <person name="Woyke T."/>
            <person name="Goodwin L."/>
            <person name="Pennacchio L."/>
            <person name="Nolan M."/>
            <person name="Cook A.M."/>
            <person name="Kjelleberg S."/>
            <person name="Thomas T."/>
        </authorList>
    </citation>
    <scope>NUCLEOTIDE SEQUENCE [LARGE SCALE GENOMIC DNA]</scope>
    <source>
        <strain>DS-1 / DSM 13023 / NCIMB 13966</strain>
    </source>
</reference>
<feature type="chain" id="PRO_1000072079" description="Small ribosomal subunit protein bS21">
    <location>
        <begin position="1"/>
        <end position="73"/>
    </location>
</feature>
<sequence length="73" mass="8668">MQVLVRDNNVDQAMKALKKKLQREGVFREMKLRNFYEKPSEKRAREKAEAIRRARKLARKRAQREAGIVTAKK</sequence>
<gene>
    <name evidence="1" type="primary">rpsU</name>
    <name type="ordered locus">Plav_2067</name>
</gene>
<organism>
    <name type="scientific">Parvibaculum lavamentivorans (strain DS-1 / DSM 13023 / NCIMB 13966)</name>
    <dbReference type="NCBI Taxonomy" id="402881"/>
    <lineage>
        <taxon>Bacteria</taxon>
        <taxon>Pseudomonadati</taxon>
        <taxon>Pseudomonadota</taxon>
        <taxon>Alphaproteobacteria</taxon>
        <taxon>Hyphomicrobiales</taxon>
        <taxon>Parvibaculaceae</taxon>
        <taxon>Parvibaculum</taxon>
    </lineage>
</organism>